<proteinExistence type="inferred from homology"/>
<reference key="1">
    <citation type="submission" date="2006-06" db="EMBL/GenBank/DDBJ databases">
        <title>Complete sequence of chromosome of Mycobacterium sp. MCS.</title>
        <authorList>
            <consortium name="US DOE Joint Genome Institute"/>
            <person name="Copeland A."/>
            <person name="Lucas S."/>
            <person name="Lapidus A."/>
            <person name="Barry K."/>
            <person name="Detter J.C."/>
            <person name="Glavina del Rio T."/>
            <person name="Hammon N."/>
            <person name="Israni S."/>
            <person name="Dalin E."/>
            <person name="Tice H."/>
            <person name="Pitluck S."/>
            <person name="Martinez M."/>
            <person name="Schmutz J."/>
            <person name="Larimer F."/>
            <person name="Land M."/>
            <person name="Hauser L."/>
            <person name="Kyrpides N."/>
            <person name="Kim E."/>
            <person name="Miller C.D."/>
            <person name="Hughes J.E."/>
            <person name="Anderson A.J."/>
            <person name="Sims R.C."/>
            <person name="Richardson P."/>
        </authorList>
    </citation>
    <scope>NUCLEOTIDE SEQUENCE [LARGE SCALE GENOMIC DNA]</scope>
    <source>
        <strain>MCS</strain>
    </source>
</reference>
<accession>Q1BD11</accession>
<dbReference type="EMBL" id="CP000384">
    <property type="protein sequence ID" value="ABG07223.1"/>
    <property type="molecule type" value="Genomic_DNA"/>
</dbReference>
<dbReference type="SMR" id="Q1BD11"/>
<dbReference type="KEGG" id="mmc:Mmcs_1110"/>
<dbReference type="HOGENOM" id="CLU_103849_1_2_11"/>
<dbReference type="BioCyc" id="MSP164756:G1G6O-1136-MONOMER"/>
<dbReference type="GO" id="GO:0005829">
    <property type="term" value="C:cytosol"/>
    <property type="evidence" value="ECO:0007669"/>
    <property type="project" value="TreeGrafter"/>
</dbReference>
<dbReference type="GO" id="GO:0015935">
    <property type="term" value="C:small ribosomal subunit"/>
    <property type="evidence" value="ECO:0007669"/>
    <property type="project" value="TreeGrafter"/>
</dbReference>
<dbReference type="GO" id="GO:0019843">
    <property type="term" value="F:rRNA binding"/>
    <property type="evidence" value="ECO:0007669"/>
    <property type="project" value="UniProtKB-UniRule"/>
</dbReference>
<dbReference type="GO" id="GO:0003735">
    <property type="term" value="F:structural constituent of ribosome"/>
    <property type="evidence" value="ECO:0007669"/>
    <property type="project" value="InterPro"/>
</dbReference>
<dbReference type="GO" id="GO:0000049">
    <property type="term" value="F:tRNA binding"/>
    <property type="evidence" value="ECO:0007669"/>
    <property type="project" value="UniProtKB-UniRule"/>
</dbReference>
<dbReference type="GO" id="GO:0006412">
    <property type="term" value="P:translation"/>
    <property type="evidence" value="ECO:0007669"/>
    <property type="project" value="UniProtKB-UniRule"/>
</dbReference>
<dbReference type="FunFam" id="1.10.8.50:FF:000001">
    <property type="entry name" value="30S ribosomal protein S13"/>
    <property type="match status" value="1"/>
</dbReference>
<dbReference type="FunFam" id="4.10.910.10:FF:000001">
    <property type="entry name" value="30S ribosomal protein S13"/>
    <property type="match status" value="1"/>
</dbReference>
<dbReference type="Gene3D" id="1.10.8.50">
    <property type="match status" value="1"/>
</dbReference>
<dbReference type="Gene3D" id="4.10.910.10">
    <property type="entry name" value="30s ribosomal protein s13, domain 2"/>
    <property type="match status" value="1"/>
</dbReference>
<dbReference type="HAMAP" id="MF_01315">
    <property type="entry name" value="Ribosomal_uS13"/>
    <property type="match status" value="1"/>
</dbReference>
<dbReference type="InterPro" id="IPR027437">
    <property type="entry name" value="Rbsml_uS13_C"/>
</dbReference>
<dbReference type="InterPro" id="IPR001892">
    <property type="entry name" value="Ribosomal_uS13"/>
</dbReference>
<dbReference type="InterPro" id="IPR010979">
    <property type="entry name" value="Ribosomal_uS13-like_H2TH"/>
</dbReference>
<dbReference type="InterPro" id="IPR019980">
    <property type="entry name" value="Ribosomal_uS13_bac-type"/>
</dbReference>
<dbReference type="InterPro" id="IPR018269">
    <property type="entry name" value="Ribosomal_uS13_CS"/>
</dbReference>
<dbReference type="NCBIfam" id="TIGR03631">
    <property type="entry name" value="uS13_bact"/>
    <property type="match status" value="1"/>
</dbReference>
<dbReference type="PANTHER" id="PTHR10871">
    <property type="entry name" value="30S RIBOSOMAL PROTEIN S13/40S RIBOSOMAL PROTEIN S18"/>
    <property type="match status" value="1"/>
</dbReference>
<dbReference type="PANTHER" id="PTHR10871:SF1">
    <property type="entry name" value="SMALL RIBOSOMAL SUBUNIT PROTEIN US13M"/>
    <property type="match status" value="1"/>
</dbReference>
<dbReference type="Pfam" id="PF00416">
    <property type="entry name" value="Ribosomal_S13"/>
    <property type="match status" value="1"/>
</dbReference>
<dbReference type="PIRSF" id="PIRSF002134">
    <property type="entry name" value="Ribosomal_S13"/>
    <property type="match status" value="1"/>
</dbReference>
<dbReference type="SUPFAM" id="SSF46946">
    <property type="entry name" value="S13-like H2TH domain"/>
    <property type="match status" value="1"/>
</dbReference>
<dbReference type="PROSITE" id="PS00646">
    <property type="entry name" value="RIBOSOMAL_S13_1"/>
    <property type="match status" value="1"/>
</dbReference>
<dbReference type="PROSITE" id="PS50159">
    <property type="entry name" value="RIBOSOMAL_S13_2"/>
    <property type="match status" value="1"/>
</dbReference>
<organism>
    <name type="scientific">Mycobacterium sp. (strain MCS)</name>
    <dbReference type="NCBI Taxonomy" id="164756"/>
    <lineage>
        <taxon>Bacteria</taxon>
        <taxon>Bacillati</taxon>
        <taxon>Actinomycetota</taxon>
        <taxon>Actinomycetes</taxon>
        <taxon>Mycobacteriales</taxon>
        <taxon>Mycobacteriaceae</taxon>
        <taxon>Mycobacterium</taxon>
    </lineage>
</organism>
<comment type="function">
    <text evidence="1">Located at the top of the head of the 30S subunit, it contacts several helices of the 16S rRNA. In the 70S ribosome it contacts the 23S rRNA (bridge B1a) and protein L5 of the 50S subunit (bridge B1b), connecting the 2 subunits; these bridges are implicated in subunit movement. Contacts the tRNAs in the A and P-sites.</text>
</comment>
<comment type="subunit">
    <text evidence="1">Part of the 30S ribosomal subunit. Forms a loose heterodimer with protein S19. Forms two bridges to the 50S subunit in the 70S ribosome.</text>
</comment>
<comment type="similarity">
    <text evidence="1">Belongs to the universal ribosomal protein uS13 family.</text>
</comment>
<evidence type="ECO:0000255" key="1">
    <source>
        <dbReference type="HAMAP-Rule" id="MF_01315"/>
    </source>
</evidence>
<evidence type="ECO:0000256" key="2">
    <source>
        <dbReference type="SAM" id="MobiDB-lite"/>
    </source>
</evidence>
<evidence type="ECO:0000305" key="3"/>
<keyword id="KW-0687">Ribonucleoprotein</keyword>
<keyword id="KW-0689">Ribosomal protein</keyword>
<keyword id="KW-0694">RNA-binding</keyword>
<keyword id="KW-0699">rRNA-binding</keyword>
<keyword id="KW-0820">tRNA-binding</keyword>
<protein>
    <recommendedName>
        <fullName evidence="1">Small ribosomal subunit protein uS13</fullName>
    </recommendedName>
    <alternativeName>
        <fullName evidence="3">30S ribosomal protein S13</fullName>
    </alternativeName>
</protein>
<sequence length="124" mass="14330">MARLVGVDLPRDKRMEIALTYIYGVGRTRSQEILEATGIDRDLRTKDLTDDQVTQLRDYIEANLKVEGDLRREVQADIRRKIEIGCYQGLRHRRGLPVRGQRTKTNARTRKGPKRTIAGKKKAR</sequence>
<feature type="chain" id="PRO_0000306651" description="Small ribosomal subunit protein uS13">
    <location>
        <begin position="1"/>
        <end position="124"/>
    </location>
</feature>
<feature type="region of interest" description="Disordered" evidence="2">
    <location>
        <begin position="95"/>
        <end position="124"/>
    </location>
</feature>
<gene>
    <name evidence="1" type="primary">rpsM</name>
    <name type="ordered locus">Mmcs_1110</name>
</gene>
<name>RS13_MYCSS</name>